<keyword id="KW-0217">Developmental protein</keyword>
<keyword id="KW-0221">Differentiation</keyword>
<keyword id="KW-0238">DNA-binding</keyword>
<keyword id="KW-0479">Metal-binding</keyword>
<keyword id="KW-0524">Neurogenesis</keyword>
<keyword id="KW-0539">Nucleus</keyword>
<keyword id="KW-1185">Reference proteome</keyword>
<keyword id="KW-0677">Repeat</keyword>
<keyword id="KW-0678">Repressor</keyword>
<keyword id="KW-0804">Transcription</keyword>
<keyword id="KW-0805">Transcription regulation</keyword>
<keyword id="KW-0862">Zinc</keyword>
<keyword id="KW-0863">Zinc-finger</keyword>
<gene>
    <name type="primary">fezf2</name>
</gene>
<comment type="function">
    <text evidence="1">Transcription repressor. Component of the regulatory cascade that controls the development of dopaminergic (DA) and serotonergic (5HT) neurons (By similarity).</text>
</comment>
<comment type="subcellular location">
    <subcellularLocation>
        <location evidence="1">Nucleus</location>
    </subcellularLocation>
</comment>
<comment type="similarity">
    <text evidence="3">Belongs to the krueppel C2H2-type zinc-finger protein family.</text>
</comment>
<sequence>MSAPLETVMSPCQRLDARTGAAAPPKSLAFSIERIMAKTSEPRAGVFEANQGLESGAKKTLNVCPPVPCMIPIQSLAYDVSPKALLNYSELWRSSIRGSLCGPSALCKSNCGICCKNDFNLSQSLAPSGRVIKPQVINQTLGMPSSGSFYYFNYLESSFHPPDLLNGQLLSSSLINAQSQATLSAHHKLFLLDNSKLSALAADKFPNPQFPHKERLPGQLDQVMKENSALTDRTGKIHTKLSANSGEGKPKIFTCEVCGKVFNAHYNLTRHMPVHTGARPFVCKVCGKGFRQASTLCRHKIIHTQEKPHKCNQCGKAFNRSSTLNTHIRIHAGYKPFVCEFCGKGFHQKGNYKNHKLTHSGEKQYKCSICNKAFHQVYNLTFHMHTHNDKKPFTCATCGKGFCRNFDLKKHVRKLHDNVSSSCSHKEISRTGQS</sequence>
<dbReference type="EMBL" id="BC110761">
    <property type="protein sequence ID" value="AAI10762.1"/>
    <property type="molecule type" value="mRNA"/>
</dbReference>
<dbReference type="RefSeq" id="NP_001089933.1">
    <property type="nucleotide sequence ID" value="NM_001096464.1"/>
</dbReference>
<dbReference type="SMR" id="Q2TAR3"/>
<dbReference type="DNASU" id="735002"/>
<dbReference type="GeneID" id="735002"/>
<dbReference type="KEGG" id="xla:735002"/>
<dbReference type="AGR" id="Xenbase:XB-GENE-1006438"/>
<dbReference type="CTD" id="735002"/>
<dbReference type="Xenbase" id="XB-GENE-1006438">
    <property type="gene designation" value="fezf2.L"/>
</dbReference>
<dbReference type="OrthoDB" id="5062908at2759"/>
<dbReference type="Proteomes" id="UP000186698">
    <property type="component" value="Chromosome 4L"/>
</dbReference>
<dbReference type="Bgee" id="735002">
    <property type="expression patterns" value="Expressed in neurula embryo and 4 other cell types or tissues"/>
</dbReference>
<dbReference type="GO" id="GO:0005634">
    <property type="term" value="C:nucleus"/>
    <property type="evidence" value="ECO:0007669"/>
    <property type="project" value="UniProtKB-SubCell"/>
</dbReference>
<dbReference type="GO" id="GO:0003700">
    <property type="term" value="F:DNA-binding transcription factor activity"/>
    <property type="evidence" value="ECO:0000318"/>
    <property type="project" value="GO_Central"/>
</dbReference>
<dbReference type="GO" id="GO:0000981">
    <property type="term" value="F:DNA-binding transcription factor activity, RNA polymerase II-specific"/>
    <property type="evidence" value="ECO:0007669"/>
    <property type="project" value="TreeGrafter"/>
</dbReference>
<dbReference type="GO" id="GO:0000978">
    <property type="term" value="F:RNA polymerase II cis-regulatory region sequence-specific DNA binding"/>
    <property type="evidence" value="ECO:0000318"/>
    <property type="project" value="GO_Central"/>
</dbReference>
<dbReference type="GO" id="GO:0008270">
    <property type="term" value="F:zinc ion binding"/>
    <property type="evidence" value="ECO:0007669"/>
    <property type="project" value="UniProtKB-KW"/>
</dbReference>
<dbReference type="GO" id="GO:0030154">
    <property type="term" value="P:cell differentiation"/>
    <property type="evidence" value="ECO:0007669"/>
    <property type="project" value="UniProtKB-KW"/>
</dbReference>
<dbReference type="GO" id="GO:0007399">
    <property type="term" value="P:nervous system development"/>
    <property type="evidence" value="ECO:0007669"/>
    <property type="project" value="UniProtKB-KW"/>
</dbReference>
<dbReference type="GO" id="GO:0006357">
    <property type="term" value="P:regulation of transcription by RNA polymerase II"/>
    <property type="evidence" value="ECO:0000318"/>
    <property type="project" value="GO_Central"/>
</dbReference>
<dbReference type="FunFam" id="3.30.160.60:FF:000103">
    <property type="entry name" value="FEZ family zinc finger 1"/>
    <property type="match status" value="1"/>
</dbReference>
<dbReference type="FunFam" id="3.30.160.60:FF:000251">
    <property type="entry name" value="FEZ family zinc finger 2"/>
    <property type="match status" value="1"/>
</dbReference>
<dbReference type="FunFam" id="3.30.160.60:FF:000227">
    <property type="entry name" value="fez family zinc finger protein 1"/>
    <property type="match status" value="1"/>
</dbReference>
<dbReference type="FunFam" id="3.30.160.60:FF:000164">
    <property type="entry name" value="Fez family zinc finger protein 2"/>
    <property type="match status" value="1"/>
</dbReference>
<dbReference type="FunFam" id="3.30.160.60:FF:000194">
    <property type="entry name" value="Fez family zinc finger protein 2"/>
    <property type="match status" value="1"/>
</dbReference>
<dbReference type="FunFam" id="3.30.160.60:FF:000863">
    <property type="entry name" value="fez family zinc finger protein 2"/>
    <property type="match status" value="1"/>
</dbReference>
<dbReference type="Gene3D" id="3.30.160.60">
    <property type="entry name" value="Classic Zinc Finger"/>
    <property type="match status" value="6"/>
</dbReference>
<dbReference type="InterPro" id="IPR036236">
    <property type="entry name" value="Znf_C2H2_sf"/>
</dbReference>
<dbReference type="InterPro" id="IPR013087">
    <property type="entry name" value="Znf_C2H2_type"/>
</dbReference>
<dbReference type="PANTHER" id="PTHR24394">
    <property type="entry name" value="ZINC FINGER PROTEIN"/>
    <property type="match status" value="1"/>
</dbReference>
<dbReference type="PANTHER" id="PTHR24394:SF48">
    <property type="entry name" value="ZINC FINGER PROTEIN 771"/>
    <property type="match status" value="1"/>
</dbReference>
<dbReference type="Pfam" id="PF00096">
    <property type="entry name" value="zf-C2H2"/>
    <property type="match status" value="5"/>
</dbReference>
<dbReference type="Pfam" id="PF13912">
    <property type="entry name" value="zf-C2H2_6"/>
    <property type="match status" value="1"/>
</dbReference>
<dbReference type="SMART" id="SM00355">
    <property type="entry name" value="ZnF_C2H2"/>
    <property type="match status" value="6"/>
</dbReference>
<dbReference type="SUPFAM" id="SSF57667">
    <property type="entry name" value="beta-beta-alpha zinc fingers"/>
    <property type="match status" value="3"/>
</dbReference>
<dbReference type="PROSITE" id="PS00028">
    <property type="entry name" value="ZINC_FINGER_C2H2_1"/>
    <property type="match status" value="6"/>
</dbReference>
<dbReference type="PROSITE" id="PS50157">
    <property type="entry name" value="ZINC_FINGER_C2H2_2"/>
    <property type="match status" value="6"/>
</dbReference>
<reference key="1">
    <citation type="submission" date="2005-12" db="EMBL/GenBank/DDBJ databases">
        <authorList>
            <consortium name="NIH - Xenopus Gene Collection (XGC) project"/>
        </authorList>
    </citation>
    <scope>NUCLEOTIDE SEQUENCE [LARGE SCALE MRNA]</scope>
    <source>
        <tissue>Embryo</tissue>
    </source>
</reference>
<proteinExistence type="evidence at transcript level"/>
<accession>Q2TAR3</accession>
<name>FEZF2_XENLA</name>
<feature type="chain" id="PRO_0000295123" description="Fez family zinc finger protein 2">
    <location>
        <begin position="1"/>
        <end position="434"/>
    </location>
</feature>
<feature type="zinc finger region" description="C2H2-type 1" evidence="2">
    <location>
        <begin position="253"/>
        <end position="275"/>
    </location>
</feature>
<feature type="zinc finger region" description="C2H2-type 2" evidence="2">
    <location>
        <begin position="281"/>
        <end position="303"/>
    </location>
</feature>
<feature type="zinc finger region" description="C2H2-type 3" evidence="2">
    <location>
        <begin position="309"/>
        <end position="331"/>
    </location>
</feature>
<feature type="zinc finger region" description="C2H2-type 4" evidence="2">
    <location>
        <begin position="337"/>
        <end position="359"/>
    </location>
</feature>
<feature type="zinc finger region" description="C2H2-type 5" evidence="2">
    <location>
        <begin position="365"/>
        <end position="387"/>
    </location>
</feature>
<feature type="zinc finger region" description="C2H2-type 6" evidence="2">
    <location>
        <begin position="393"/>
        <end position="416"/>
    </location>
</feature>
<feature type="short sequence motif" description="Engrailed homology 1 repressor" evidence="1">
    <location>
        <begin position="27"/>
        <end position="42"/>
    </location>
</feature>
<organism>
    <name type="scientific">Xenopus laevis</name>
    <name type="common">African clawed frog</name>
    <dbReference type="NCBI Taxonomy" id="8355"/>
    <lineage>
        <taxon>Eukaryota</taxon>
        <taxon>Metazoa</taxon>
        <taxon>Chordata</taxon>
        <taxon>Craniata</taxon>
        <taxon>Vertebrata</taxon>
        <taxon>Euteleostomi</taxon>
        <taxon>Amphibia</taxon>
        <taxon>Batrachia</taxon>
        <taxon>Anura</taxon>
        <taxon>Pipoidea</taxon>
        <taxon>Pipidae</taxon>
        <taxon>Xenopodinae</taxon>
        <taxon>Xenopus</taxon>
        <taxon>Xenopus</taxon>
    </lineage>
</organism>
<evidence type="ECO:0000250" key="1"/>
<evidence type="ECO:0000255" key="2">
    <source>
        <dbReference type="PROSITE-ProRule" id="PRU00042"/>
    </source>
</evidence>
<evidence type="ECO:0000305" key="3"/>
<protein>
    <recommendedName>
        <fullName>Fez family zinc finger protein 2</fullName>
    </recommendedName>
</protein>